<gene>
    <name type="ordered locus">YPDSF_0935</name>
</gene>
<reference key="1">
    <citation type="submission" date="2007-02" db="EMBL/GenBank/DDBJ databases">
        <title>Complete sequence of chromosome of Yersinia pestis Pestoides F.</title>
        <authorList>
            <consortium name="US DOE Joint Genome Institute"/>
            <person name="Copeland A."/>
            <person name="Lucas S."/>
            <person name="Lapidus A."/>
            <person name="Barry K."/>
            <person name="Detter J.C."/>
            <person name="Glavina del Rio T."/>
            <person name="Hammon N."/>
            <person name="Israni S."/>
            <person name="Dalin E."/>
            <person name="Tice H."/>
            <person name="Pitluck S."/>
            <person name="Di Bartolo G."/>
            <person name="Chain P."/>
            <person name="Malfatti S."/>
            <person name="Shin M."/>
            <person name="Vergez L."/>
            <person name="Schmutz J."/>
            <person name="Larimer F."/>
            <person name="Land M."/>
            <person name="Hauser L."/>
            <person name="Worsham P."/>
            <person name="Chu M."/>
            <person name="Bearden S."/>
            <person name="Garcia E."/>
            <person name="Richardson P."/>
        </authorList>
    </citation>
    <scope>NUCLEOTIDE SEQUENCE [LARGE SCALE GENOMIC DNA]</scope>
    <source>
        <strain>Pestoides F</strain>
    </source>
</reference>
<dbReference type="EMBL" id="CP000668">
    <property type="protein sequence ID" value="ABP39335.1"/>
    <property type="molecule type" value="Genomic_DNA"/>
</dbReference>
<dbReference type="RefSeq" id="WP_002210639.1">
    <property type="nucleotide sequence ID" value="NZ_CP009715.1"/>
</dbReference>
<dbReference type="KEGG" id="ypp:YPDSF_0935"/>
<dbReference type="PATRIC" id="fig|386656.14.peg.2916"/>
<dbReference type="GO" id="GO:0005886">
    <property type="term" value="C:plasma membrane"/>
    <property type="evidence" value="ECO:0007669"/>
    <property type="project" value="UniProtKB-SubCell"/>
</dbReference>
<dbReference type="HAMAP" id="MF_01067">
    <property type="entry name" value="UPF0259"/>
    <property type="match status" value="1"/>
</dbReference>
<dbReference type="InterPro" id="IPR009627">
    <property type="entry name" value="UPF0259"/>
</dbReference>
<dbReference type="NCBIfam" id="NF002774">
    <property type="entry name" value="PRK02868.1"/>
    <property type="match status" value="1"/>
</dbReference>
<dbReference type="Pfam" id="PF06790">
    <property type="entry name" value="UPF0259"/>
    <property type="match status" value="1"/>
</dbReference>
<evidence type="ECO:0000255" key="1">
    <source>
        <dbReference type="HAMAP-Rule" id="MF_01067"/>
    </source>
</evidence>
<proteinExistence type="inferred from homology"/>
<protein>
    <recommendedName>
        <fullName evidence="1">UPF0259 membrane protein YPDSF_0935</fullName>
    </recommendedName>
</protein>
<feature type="chain" id="PRO_1000064541" description="UPF0259 membrane protein YPDSF_0935">
    <location>
        <begin position="1"/>
        <end position="256"/>
    </location>
</feature>
<feature type="transmembrane region" description="Helical" evidence="1">
    <location>
        <begin position="20"/>
        <end position="40"/>
    </location>
</feature>
<feature type="transmembrane region" description="Helical" evidence="1">
    <location>
        <begin position="90"/>
        <end position="110"/>
    </location>
</feature>
<feature type="transmembrane region" description="Helical" evidence="1">
    <location>
        <begin position="118"/>
        <end position="138"/>
    </location>
</feature>
<feature type="transmembrane region" description="Helical" evidence="1">
    <location>
        <begin position="141"/>
        <end position="161"/>
    </location>
</feature>
<feature type="transmembrane region" description="Helical" evidence="1">
    <location>
        <begin position="192"/>
        <end position="212"/>
    </location>
</feature>
<feature type="transmembrane region" description="Helical" evidence="1">
    <location>
        <begin position="221"/>
        <end position="241"/>
    </location>
</feature>
<organism>
    <name type="scientific">Yersinia pestis (strain Pestoides F)</name>
    <dbReference type="NCBI Taxonomy" id="386656"/>
    <lineage>
        <taxon>Bacteria</taxon>
        <taxon>Pseudomonadati</taxon>
        <taxon>Pseudomonadota</taxon>
        <taxon>Gammaproteobacteria</taxon>
        <taxon>Enterobacterales</taxon>
        <taxon>Yersiniaceae</taxon>
        <taxon>Yersinia</taxon>
    </lineage>
</organism>
<name>Y935_YERPP</name>
<keyword id="KW-0997">Cell inner membrane</keyword>
<keyword id="KW-1003">Cell membrane</keyword>
<keyword id="KW-0472">Membrane</keyword>
<keyword id="KW-0812">Transmembrane</keyword>
<keyword id="KW-1133">Transmembrane helix</keyword>
<accession>A4TJ73</accession>
<sequence length="256" mass="27754">MPITANTLYRDSFNFLRNQIAAILLLALLTAFITVMLNQTFMPASEQLSILSIPENDITSSGNLSISEIVSQMTPEQQMVLLRVSAVATFSALVGNVLLVGGLLTLIAMVSQGRRVSALQAIGLSLPILPRLLVLMFISTLVIQLGLTFFIVPGVAIAIALSLSPIIVTNERMGIFAAMKASAQLAFANVRLIVPAMMLWIAVKLLLLFLISRFTVLPPTIATIVLSTLSNLASALLLVYLFRLYMLLRPVSLDKQ</sequence>
<comment type="subcellular location">
    <subcellularLocation>
        <location evidence="1">Cell inner membrane</location>
        <topology evidence="1">Multi-pass membrane protein</topology>
    </subcellularLocation>
</comment>
<comment type="similarity">
    <text evidence="1">Belongs to the UPF0259 family.</text>
</comment>